<reference key="1">
    <citation type="journal article" date="2006" name="PLoS Biol.">
        <title>Metabolic complementarity and genomics of the dual bacterial symbiosis of sharpshooters.</title>
        <authorList>
            <person name="Wu D."/>
            <person name="Daugherty S.C."/>
            <person name="Van Aken S.E."/>
            <person name="Pai G.H."/>
            <person name="Watkins K.L."/>
            <person name="Khouri H."/>
            <person name="Tallon L.J."/>
            <person name="Zaborsky J.M."/>
            <person name="Dunbar H.E."/>
            <person name="Tran P.L."/>
            <person name="Moran N.A."/>
            <person name="Eisen J.A."/>
        </authorList>
    </citation>
    <scope>NUCLEOTIDE SEQUENCE [LARGE SCALE GENOMIC DNA]</scope>
</reference>
<protein>
    <recommendedName>
        <fullName evidence="1">Phosphoenolpyruvate carboxykinase (ATP)</fullName>
        <shortName evidence="1">PCK</shortName>
        <shortName evidence="1">PEP carboxykinase</shortName>
        <shortName evidence="1">PEPCK</shortName>
        <ecNumber evidence="1">4.1.1.49</ecNumber>
    </recommendedName>
</protein>
<name>PCKA_BAUCH</name>
<sequence>MLSNNIIRQQLIHYGITDCCELIYNPSFEQLVREETNHNLTNLERGTITNSGAIAVNTGIFTGRSPLDKYIVCDNDTHHQLWWSDQDKTSNNQPISQITWQYLKKLVSKQLSYKRLFIIDVYCGAKKNSRLRVRFVTEVAWQAHFVKNMFIQPDAIDLISFEPEFIVLNGAKCTNPNWREQNMHSENFIALNLTEGMQLIAGTWYGGEMKKGLFTVMNYHLPLKGIASMHCSANVGINKDVALFFGLSGTGKTTLSHDTNRALIGDDEHGWDNDGIFNLEGGCYAKTINLKPELEPEIFQAIRCNALLENVMVRADGSVNYHDNSKTDNARVSYPLNHIKNRVQPVSCASHASTIIFLTADAFGVLPPVATLTNEQAQYYFLSGFSAKLSGTERGIISPVPTFSACFGAAFLALHPTVYAALLAKRMNIAGTNAYLVNTGWNGNGSRIALKDTKAIINAILNKQIQDTPTIKLPIFNLSIPQILIGVDSNILDPRTSYINSSEWQNKARSLAQLFIKNFNKFTLPLTCKKLHNAGPQL</sequence>
<feature type="chain" id="PRO_1000026316" description="Phosphoenolpyruvate carboxykinase (ATP)">
    <location>
        <begin position="1"/>
        <end position="538"/>
    </location>
</feature>
<feature type="binding site" evidence="1">
    <location>
        <position position="64"/>
    </location>
    <ligand>
        <name>substrate</name>
    </ligand>
</feature>
<feature type="binding site" evidence="1">
    <location>
        <position position="205"/>
    </location>
    <ligand>
        <name>substrate</name>
    </ligand>
</feature>
<feature type="binding site" evidence="1">
    <location>
        <position position="211"/>
    </location>
    <ligand>
        <name>ATP</name>
        <dbReference type="ChEBI" id="CHEBI:30616"/>
    </ligand>
</feature>
<feature type="binding site" evidence="1">
    <location>
        <position position="211"/>
    </location>
    <ligand>
        <name>Mn(2+)</name>
        <dbReference type="ChEBI" id="CHEBI:29035"/>
    </ligand>
</feature>
<feature type="binding site" evidence="1">
    <location>
        <position position="211"/>
    </location>
    <ligand>
        <name>substrate</name>
    </ligand>
</feature>
<feature type="binding site" evidence="1">
    <location>
        <position position="230"/>
    </location>
    <ligand>
        <name>ATP</name>
        <dbReference type="ChEBI" id="CHEBI:30616"/>
    </ligand>
</feature>
<feature type="binding site" evidence="1">
    <location>
        <position position="230"/>
    </location>
    <ligand>
        <name>Mn(2+)</name>
        <dbReference type="ChEBI" id="CHEBI:29035"/>
    </ligand>
</feature>
<feature type="binding site" evidence="1">
    <location>
        <begin position="246"/>
        <end position="254"/>
    </location>
    <ligand>
        <name>ATP</name>
        <dbReference type="ChEBI" id="CHEBI:30616"/>
    </ligand>
</feature>
<feature type="binding site" evidence="1">
    <location>
        <position position="267"/>
    </location>
    <ligand>
        <name>Mn(2+)</name>
        <dbReference type="ChEBI" id="CHEBI:29035"/>
    </ligand>
</feature>
<feature type="binding site" evidence="1">
    <location>
        <position position="295"/>
    </location>
    <ligand>
        <name>ATP</name>
        <dbReference type="ChEBI" id="CHEBI:30616"/>
    </ligand>
</feature>
<feature type="binding site" evidence="1">
    <location>
        <position position="331"/>
    </location>
    <ligand>
        <name>ATP</name>
        <dbReference type="ChEBI" id="CHEBI:30616"/>
    </ligand>
</feature>
<feature type="binding site" evidence="1">
    <location>
        <position position="331"/>
    </location>
    <ligand>
        <name>substrate</name>
    </ligand>
</feature>
<feature type="binding site" evidence="1">
    <location>
        <begin position="447"/>
        <end position="448"/>
    </location>
    <ligand>
        <name>ATP</name>
        <dbReference type="ChEBI" id="CHEBI:30616"/>
    </ligand>
</feature>
<feature type="binding site" evidence="1">
    <location>
        <position position="453"/>
    </location>
    <ligand>
        <name>ATP</name>
        <dbReference type="ChEBI" id="CHEBI:30616"/>
    </ligand>
</feature>
<keyword id="KW-0067">ATP-binding</keyword>
<keyword id="KW-0963">Cytoplasm</keyword>
<keyword id="KW-0210">Decarboxylase</keyword>
<keyword id="KW-0312">Gluconeogenesis</keyword>
<keyword id="KW-0456">Lyase</keyword>
<keyword id="KW-0464">Manganese</keyword>
<keyword id="KW-0479">Metal-binding</keyword>
<keyword id="KW-0547">Nucleotide-binding</keyword>
<keyword id="KW-1185">Reference proteome</keyword>
<organism>
    <name type="scientific">Baumannia cicadellinicola subsp. Homalodisca coagulata</name>
    <dbReference type="NCBI Taxonomy" id="374463"/>
    <lineage>
        <taxon>Bacteria</taxon>
        <taxon>Pseudomonadati</taxon>
        <taxon>Pseudomonadota</taxon>
        <taxon>Gammaproteobacteria</taxon>
        <taxon>Candidatus Palibaumannia</taxon>
    </lineage>
</organism>
<gene>
    <name evidence="1" type="primary">pckA</name>
    <name type="ordered locus">BCI_0013</name>
</gene>
<dbReference type="EC" id="4.1.1.49" evidence="1"/>
<dbReference type="EMBL" id="CP000238">
    <property type="protein sequence ID" value="ABF13999.1"/>
    <property type="molecule type" value="Genomic_DNA"/>
</dbReference>
<dbReference type="RefSeq" id="WP_011520225.1">
    <property type="nucleotide sequence ID" value="NC_007984.1"/>
</dbReference>
<dbReference type="SMR" id="Q1LU72"/>
<dbReference type="STRING" id="374463.BCI_0013"/>
<dbReference type="KEGG" id="bci:BCI_0013"/>
<dbReference type="HOGENOM" id="CLU_018247_0_1_6"/>
<dbReference type="OrthoDB" id="9806325at2"/>
<dbReference type="UniPathway" id="UPA00138"/>
<dbReference type="Proteomes" id="UP000002427">
    <property type="component" value="Chromosome"/>
</dbReference>
<dbReference type="GO" id="GO:0005829">
    <property type="term" value="C:cytosol"/>
    <property type="evidence" value="ECO:0007669"/>
    <property type="project" value="TreeGrafter"/>
</dbReference>
<dbReference type="GO" id="GO:0005524">
    <property type="term" value="F:ATP binding"/>
    <property type="evidence" value="ECO:0007669"/>
    <property type="project" value="UniProtKB-UniRule"/>
</dbReference>
<dbReference type="GO" id="GO:0046872">
    <property type="term" value="F:metal ion binding"/>
    <property type="evidence" value="ECO:0007669"/>
    <property type="project" value="UniProtKB-KW"/>
</dbReference>
<dbReference type="GO" id="GO:0004612">
    <property type="term" value="F:phosphoenolpyruvate carboxykinase (ATP) activity"/>
    <property type="evidence" value="ECO:0007669"/>
    <property type="project" value="UniProtKB-UniRule"/>
</dbReference>
<dbReference type="GO" id="GO:0006094">
    <property type="term" value="P:gluconeogenesis"/>
    <property type="evidence" value="ECO:0007669"/>
    <property type="project" value="UniProtKB-UniRule"/>
</dbReference>
<dbReference type="FunFam" id="3.40.449.10:FF:000001">
    <property type="entry name" value="Phosphoenolpyruvate carboxykinase (ATP)"/>
    <property type="match status" value="1"/>
</dbReference>
<dbReference type="Gene3D" id="3.90.228.20">
    <property type="match status" value="1"/>
</dbReference>
<dbReference type="Gene3D" id="3.40.449.10">
    <property type="entry name" value="Phosphoenolpyruvate Carboxykinase, domain 1"/>
    <property type="match status" value="1"/>
</dbReference>
<dbReference type="Gene3D" id="2.170.8.10">
    <property type="entry name" value="Phosphoenolpyruvate Carboxykinase, domain 2"/>
    <property type="match status" value="1"/>
</dbReference>
<dbReference type="HAMAP" id="MF_00453">
    <property type="entry name" value="PEPCK_ATP"/>
    <property type="match status" value="1"/>
</dbReference>
<dbReference type="InterPro" id="IPR001272">
    <property type="entry name" value="PEP_carboxykinase_ATP"/>
</dbReference>
<dbReference type="InterPro" id="IPR013035">
    <property type="entry name" value="PEP_carboxykinase_C"/>
</dbReference>
<dbReference type="InterPro" id="IPR008210">
    <property type="entry name" value="PEP_carboxykinase_N"/>
</dbReference>
<dbReference type="InterPro" id="IPR015994">
    <property type="entry name" value="PEPCK_ATP_CS"/>
</dbReference>
<dbReference type="NCBIfam" id="TIGR00224">
    <property type="entry name" value="pckA"/>
    <property type="match status" value="1"/>
</dbReference>
<dbReference type="NCBIfam" id="NF006819">
    <property type="entry name" value="PRK09344.1-1"/>
    <property type="match status" value="1"/>
</dbReference>
<dbReference type="NCBIfam" id="NF006820">
    <property type="entry name" value="PRK09344.1-2"/>
    <property type="match status" value="1"/>
</dbReference>
<dbReference type="NCBIfam" id="NF006821">
    <property type="entry name" value="PRK09344.1-3"/>
    <property type="match status" value="1"/>
</dbReference>
<dbReference type="PANTHER" id="PTHR30031:SF0">
    <property type="entry name" value="PHOSPHOENOLPYRUVATE CARBOXYKINASE (ATP)"/>
    <property type="match status" value="1"/>
</dbReference>
<dbReference type="PANTHER" id="PTHR30031">
    <property type="entry name" value="PHOSPHOENOLPYRUVATE CARBOXYKINASE ATP"/>
    <property type="match status" value="1"/>
</dbReference>
<dbReference type="Pfam" id="PF01293">
    <property type="entry name" value="PEPCK_ATP"/>
    <property type="match status" value="1"/>
</dbReference>
<dbReference type="PIRSF" id="PIRSF006294">
    <property type="entry name" value="PEP_crbxkin"/>
    <property type="match status" value="1"/>
</dbReference>
<dbReference type="SUPFAM" id="SSF68923">
    <property type="entry name" value="PEP carboxykinase N-terminal domain"/>
    <property type="match status" value="1"/>
</dbReference>
<dbReference type="SUPFAM" id="SSF53795">
    <property type="entry name" value="PEP carboxykinase-like"/>
    <property type="match status" value="1"/>
</dbReference>
<dbReference type="PROSITE" id="PS00532">
    <property type="entry name" value="PEPCK_ATP"/>
    <property type="match status" value="1"/>
</dbReference>
<proteinExistence type="inferred from homology"/>
<accession>Q1LU72</accession>
<comment type="function">
    <text evidence="1">Involved in the gluconeogenesis. Catalyzes the conversion of oxaloacetate (OAA) to phosphoenolpyruvate (PEP) through direct phosphoryl transfer between the nucleoside triphosphate and OAA.</text>
</comment>
<comment type="catalytic activity">
    <reaction evidence="1">
        <text>oxaloacetate + ATP = phosphoenolpyruvate + ADP + CO2</text>
        <dbReference type="Rhea" id="RHEA:18617"/>
        <dbReference type="ChEBI" id="CHEBI:16452"/>
        <dbReference type="ChEBI" id="CHEBI:16526"/>
        <dbReference type="ChEBI" id="CHEBI:30616"/>
        <dbReference type="ChEBI" id="CHEBI:58702"/>
        <dbReference type="ChEBI" id="CHEBI:456216"/>
        <dbReference type="EC" id="4.1.1.49"/>
    </reaction>
</comment>
<comment type="cofactor">
    <cofactor evidence="1">
        <name>Mn(2+)</name>
        <dbReference type="ChEBI" id="CHEBI:29035"/>
    </cofactor>
    <text evidence="1">Binds 1 Mn(2+) ion per subunit.</text>
</comment>
<comment type="pathway">
    <text evidence="1">Carbohydrate biosynthesis; gluconeogenesis.</text>
</comment>
<comment type="subunit">
    <text evidence="1">Monomer.</text>
</comment>
<comment type="subcellular location">
    <subcellularLocation>
        <location evidence="1">Cytoplasm</location>
    </subcellularLocation>
</comment>
<comment type="similarity">
    <text evidence="1">Belongs to the phosphoenolpyruvate carboxykinase (ATP) family.</text>
</comment>
<evidence type="ECO:0000255" key="1">
    <source>
        <dbReference type="HAMAP-Rule" id="MF_00453"/>
    </source>
</evidence>